<organism>
    <name type="scientific">Nostoc punctiforme (strain ATCC 29133 / PCC 73102)</name>
    <dbReference type="NCBI Taxonomy" id="63737"/>
    <lineage>
        <taxon>Bacteria</taxon>
        <taxon>Bacillati</taxon>
        <taxon>Cyanobacteriota</taxon>
        <taxon>Cyanophyceae</taxon>
        <taxon>Nostocales</taxon>
        <taxon>Nostocaceae</taxon>
        <taxon>Nostoc</taxon>
    </lineage>
</organism>
<dbReference type="EMBL" id="CP001037">
    <property type="protein sequence ID" value="ACC81090.1"/>
    <property type="molecule type" value="Genomic_DNA"/>
</dbReference>
<dbReference type="RefSeq" id="WP_012409084.1">
    <property type="nucleotide sequence ID" value="NC_010628.1"/>
</dbReference>
<dbReference type="SMR" id="B2J9R3"/>
<dbReference type="STRING" id="63737.Npun_R2533"/>
<dbReference type="EnsemblBacteria" id="ACC81090">
    <property type="protein sequence ID" value="ACC81090"/>
    <property type="gene ID" value="Npun_R2533"/>
</dbReference>
<dbReference type="KEGG" id="npu:Npun_R2533"/>
<dbReference type="eggNOG" id="COG1489">
    <property type="taxonomic scope" value="Bacteria"/>
</dbReference>
<dbReference type="HOGENOM" id="CLU_052299_2_0_3"/>
<dbReference type="OrthoDB" id="9802365at2"/>
<dbReference type="PhylomeDB" id="B2J9R3"/>
<dbReference type="Proteomes" id="UP000001191">
    <property type="component" value="Chromosome"/>
</dbReference>
<dbReference type="GO" id="GO:0003677">
    <property type="term" value="F:DNA binding"/>
    <property type="evidence" value="ECO:0007669"/>
    <property type="project" value="InterPro"/>
</dbReference>
<dbReference type="CDD" id="cd22359">
    <property type="entry name" value="SfsA-like_bacterial"/>
    <property type="match status" value="1"/>
</dbReference>
<dbReference type="Gene3D" id="2.40.50.580">
    <property type="match status" value="1"/>
</dbReference>
<dbReference type="Gene3D" id="3.40.1350.60">
    <property type="match status" value="1"/>
</dbReference>
<dbReference type="HAMAP" id="MF_00095">
    <property type="entry name" value="SfsA"/>
    <property type="match status" value="1"/>
</dbReference>
<dbReference type="InterPro" id="IPR005224">
    <property type="entry name" value="SfsA"/>
</dbReference>
<dbReference type="InterPro" id="IPR040452">
    <property type="entry name" value="SfsA_C"/>
</dbReference>
<dbReference type="InterPro" id="IPR041465">
    <property type="entry name" value="SfsA_N"/>
</dbReference>
<dbReference type="NCBIfam" id="TIGR00230">
    <property type="entry name" value="sfsA"/>
    <property type="match status" value="1"/>
</dbReference>
<dbReference type="PANTHER" id="PTHR30545">
    <property type="entry name" value="SUGAR FERMENTATION STIMULATION PROTEIN A"/>
    <property type="match status" value="1"/>
</dbReference>
<dbReference type="PANTHER" id="PTHR30545:SF2">
    <property type="entry name" value="SUGAR FERMENTATION STIMULATION PROTEIN A"/>
    <property type="match status" value="1"/>
</dbReference>
<dbReference type="Pfam" id="PF03749">
    <property type="entry name" value="SfsA"/>
    <property type="match status" value="1"/>
</dbReference>
<dbReference type="Pfam" id="PF17746">
    <property type="entry name" value="SfsA_N"/>
    <property type="match status" value="1"/>
</dbReference>
<name>SFSA_NOSP7</name>
<reference key="1">
    <citation type="journal article" date="2013" name="Plant Physiol.">
        <title>A Nostoc punctiforme Sugar Transporter Necessary to Establish a Cyanobacterium-Plant Symbiosis.</title>
        <authorList>
            <person name="Ekman M."/>
            <person name="Picossi S."/>
            <person name="Campbell E.L."/>
            <person name="Meeks J.C."/>
            <person name="Flores E."/>
        </authorList>
    </citation>
    <scope>NUCLEOTIDE SEQUENCE [LARGE SCALE GENOMIC DNA]</scope>
    <source>
        <strain>ATCC 29133 / PCC 73102</strain>
    </source>
</reference>
<keyword id="KW-1185">Reference proteome</keyword>
<sequence length="241" mass="27351">MMDWLYRYPPLYPGILLKRYKRFFADVQLTSGEIVTAHCPNTGPMTGVSTPQSAVQLSKSDNLNRKLAYTLELIQVHDNEPTWVGINTFLPNRVVKLALAKYLFPELGEYSQIKGEVVYGLDKKSRVDFFLTGSDEERPIYLEVKNTTLSEGRLALFPDTETTRGQKHLRELMALLPLTRAVMLYFINRGDCTEFSPGDRTDPVYGKLLRDAIALGLEVLPCRFDISPEGIRYLGLAKLKI</sequence>
<accession>B2J9R3</accession>
<comment type="similarity">
    <text evidence="1">Belongs to the SfsA family.</text>
</comment>
<protein>
    <recommendedName>
        <fullName evidence="1">Sugar fermentation stimulation protein homolog</fullName>
    </recommendedName>
</protein>
<evidence type="ECO:0000255" key="1">
    <source>
        <dbReference type="HAMAP-Rule" id="MF_00095"/>
    </source>
</evidence>
<proteinExistence type="inferred from homology"/>
<gene>
    <name evidence="1" type="primary">sfsA</name>
    <name type="ordered locus">Npun_R2533</name>
</gene>
<feature type="chain" id="PRO_1000093579" description="Sugar fermentation stimulation protein homolog">
    <location>
        <begin position="1"/>
        <end position="241"/>
    </location>
</feature>